<protein>
    <recommendedName>
        <fullName>Protein S100-A10</fullName>
    </recommendedName>
    <alternativeName>
        <fullName>Calpactin I light chain</fullName>
    </alternativeName>
    <alternativeName>
        <fullName>Calpactin-1 light chain</fullName>
    </alternativeName>
    <alternativeName>
        <fullName>Cellular ligand of annexin II</fullName>
    </alternativeName>
    <alternativeName>
        <fullName>S100 calcium-binding protein A10</fullName>
    </alternativeName>
    <alternativeName>
        <fullName>p10 protein</fullName>
    </alternativeName>
    <alternativeName>
        <fullName>p11</fullName>
    </alternativeName>
</protein>
<gene>
    <name type="primary">S100A10</name>
</gene>
<keyword id="KW-0007">Acetylation</keyword>
<keyword id="KW-0903">Direct protein sequencing</keyword>
<keyword id="KW-1017">Isopeptide bond</keyword>
<keyword id="KW-1185">Reference proteome</keyword>
<keyword id="KW-0832">Ubl conjugation</keyword>
<sequence>MPSQMEHAMETMMFTFHKFAGDKGYLTKEDLRVLMEKEFPGFLENQKDPLAVDKIMKDLDQCRDGKVGFQSFFSLIAGLTIACNDYFVVHMKQKGK</sequence>
<dbReference type="PIR" id="A03079">
    <property type="entry name" value="LUPG10"/>
</dbReference>
<dbReference type="SMR" id="P04163"/>
<dbReference type="FunCoup" id="P04163">
    <property type="interactions" value="353"/>
</dbReference>
<dbReference type="IntAct" id="P04163">
    <property type="interactions" value="1"/>
</dbReference>
<dbReference type="STRING" id="9823.ENSSSCP00000030365"/>
<dbReference type="PaxDb" id="9823-ENSSSCP00000007051"/>
<dbReference type="PeptideAtlas" id="P04163"/>
<dbReference type="eggNOG" id="ENOG502S6TB">
    <property type="taxonomic scope" value="Eukaryota"/>
</dbReference>
<dbReference type="HOGENOM" id="CLU_138624_2_1_1"/>
<dbReference type="InParanoid" id="P04163"/>
<dbReference type="OMA" id="VACEQCY"/>
<dbReference type="Proteomes" id="UP000008227">
    <property type="component" value="Unplaced"/>
</dbReference>
<dbReference type="Proteomes" id="UP000314985">
    <property type="component" value="Unplaced"/>
</dbReference>
<dbReference type="Proteomes" id="UP000694570">
    <property type="component" value="Unplaced"/>
</dbReference>
<dbReference type="Proteomes" id="UP000694571">
    <property type="component" value="Unplaced"/>
</dbReference>
<dbReference type="Proteomes" id="UP000694720">
    <property type="component" value="Unplaced"/>
</dbReference>
<dbReference type="Proteomes" id="UP000694722">
    <property type="component" value="Unplaced"/>
</dbReference>
<dbReference type="Proteomes" id="UP000694723">
    <property type="component" value="Unplaced"/>
</dbReference>
<dbReference type="Proteomes" id="UP000694724">
    <property type="component" value="Unplaced"/>
</dbReference>
<dbReference type="Proteomes" id="UP000694725">
    <property type="component" value="Unplaced"/>
</dbReference>
<dbReference type="Proteomes" id="UP000694726">
    <property type="component" value="Unplaced"/>
</dbReference>
<dbReference type="Proteomes" id="UP000694727">
    <property type="component" value="Unplaced"/>
</dbReference>
<dbReference type="Proteomes" id="UP000694728">
    <property type="component" value="Unplaced"/>
</dbReference>
<dbReference type="GO" id="GO:0005737">
    <property type="term" value="C:cytoplasm"/>
    <property type="evidence" value="ECO:0000318"/>
    <property type="project" value="GO_Central"/>
</dbReference>
<dbReference type="GO" id="GO:0005509">
    <property type="term" value="F:calcium ion binding"/>
    <property type="evidence" value="ECO:0000318"/>
    <property type="project" value="GO_Central"/>
</dbReference>
<dbReference type="GO" id="GO:0048306">
    <property type="term" value="F:calcium-dependent protein binding"/>
    <property type="evidence" value="ECO:0000318"/>
    <property type="project" value="GO_Central"/>
</dbReference>
<dbReference type="GO" id="GO:0044325">
    <property type="term" value="F:transmembrane transporter binding"/>
    <property type="evidence" value="ECO:0000318"/>
    <property type="project" value="GO_Central"/>
</dbReference>
<dbReference type="CDD" id="cd05024">
    <property type="entry name" value="S-100A10"/>
    <property type="match status" value="1"/>
</dbReference>
<dbReference type="FunFam" id="1.10.238.10:FF:000167">
    <property type="entry name" value="Protein S100-A10"/>
    <property type="match status" value="1"/>
</dbReference>
<dbReference type="Gene3D" id="1.10.238.10">
    <property type="entry name" value="EF-hand"/>
    <property type="match status" value="1"/>
</dbReference>
<dbReference type="InterPro" id="IPR011992">
    <property type="entry name" value="EF-hand-dom_pair"/>
</dbReference>
<dbReference type="InterPro" id="IPR028476">
    <property type="entry name" value="S100-A10"/>
</dbReference>
<dbReference type="InterPro" id="IPR001751">
    <property type="entry name" value="S100/CaBP7/8-like_CS"/>
</dbReference>
<dbReference type="InterPro" id="IPR013787">
    <property type="entry name" value="S100_Ca-bd_sub"/>
</dbReference>
<dbReference type="PANTHER" id="PTHR11639:SF74">
    <property type="entry name" value="PROTEIN S100-A10"/>
    <property type="match status" value="1"/>
</dbReference>
<dbReference type="PANTHER" id="PTHR11639">
    <property type="entry name" value="S100 CALCIUM-BINDING PROTEIN"/>
    <property type="match status" value="1"/>
</dbReference>
<dbReference type="Pfam" id="PF01023">
    <property type="entry name" value="S_100"/>
    <property type="match status" value="1"/>
</dbReference>
<dbReference type="SMART" id="SM01394">
    <property type="entry name" value="S_100"/>
    <property type="match status" value="1"/>
</dbReference>
<dbReference type="SUPFAM" id="SSF47473">
    <property type="entry name" value="EF-hand"/>
    <property type="match status" value="1"/>
</dbReference>
<dbReference type="PROSITE" id="PS00303">
    <property type="entry name" value="S100_CABP"/>
    <property type="match status" value="1"/>
</dbReference>
<reference key="1">
    <citation type="journal article" date="1985" name="EMBO J.">
        <title>The regulatory chain in the p36-kd substrate complex of viral tyrosine-specific protein kinases is related in sequence to the S-100 protein of glial cells.</title>
        <authorList>
            <person name="Gerke V."/>
            <person name="Weber K."/>
        </authorList>
    </citation>
    <scope>PROTEIN SEQUENCE OF 2-96</scope>
    <source>
        <tissue>Intestinal epithelium</tissue>
    </source>
</reference>
<accession>P04163</accession>
<evidence type="ECO:0000250" key="1"/>
<evidence type="ECO:0000250" key="2">
    <source>
        <dbReference type="UniProtKB" id="P05943"/>
    </source>
</evidence>
<evidence type="ECO:0000250" key="3">
    <source>
        <dbReference type="UniProtKB" id="P08207"/>
    </source>
</evidence>
<evidence type="ECO:0000250" key="4">
    <source>
        <dbReference type="UniProtKB" id="P60903"/>
    </source>
</evidence>
<evidence type="ECO:0000269" key="5">
    <source>
    </source>
</evidence>
<evidence type="ECO:0000305" key="6"/>
<feature type="initiator methionine" description="Removed" evidence="5">
    <location>
        <position position="1"/>
    </location>
</feature>
<feature type="chain" id="PRO_0000144005" description="Protein S100-A10">
    <location>
        <begin position="2"/>
        <end position="96"/>
    </location>
</feature>
<feature type="region of interest" description="Ancestral calcium site">
    <location>
        <begin position="60"/>
        <end position="71"/>
    </location>
</feature>
<feature type="modified residue" description="N6-acetyllysine" evidence="4">
    <location>
        <position position="23"/>
    </location>
</feature>
<feature type="modified residue" description="N6-acetyllysine" evidence="4">
    <location>
        <position position="28"/>
    </location>
</feature>
<feature type="modified residue" description="N6-acetyllysine; alternate" evidence="4">
    <location>
        <position position="37"/>
    </location>
</feature>
<feature type="modified residue" description="N6-acetyllysine" evidence="4">
    <location>
        <position position="54"/>
    </location>
</feature>
<feature type="modified residue" description="N6-acetyllysine" evidence="4">
    <location>
        <position position="57"/>
    </location>
</feature>
<feature type="cross-link" description="Glycyl lysine isopeptide (Lys-Gly) (interchain with G-Cter in SUMO2); alternate" evidence="4">
    <location>
        <position position="37"/>
    </location>
</feature>
<proteinExistence type="evidence at protein level"/>
<name>S10AA_PIG</name>
<organism>
    <name type="scientific">Sus scrofa</name>
    <name type="common">Pig</name>
    <dbReference type="NCBI Taxonomy" id="9823"/>
    <lineage>
        <taxon>Eukaryota</taxon>
        <taxon>Metazoa</taxon>
        <taxon>Chordata</taxon>
        <taxon>Craniata</taxon>
        <taxon>Vertebrata</taxon>
        <taxon>Euteleostomi</taxon>
        <taxon>Mammalia</taxon>
        <taxon>Eutheria</taxon>
        <taxon>Laurasiatheria</taxon>
        <taxon>Artiodactyla</taxon>
        <taxon>Suina</taxon>
        <taxon>Suidae</taxon>
        <taxon>Sus</taxon>
    </lineage>
</organism>
<comment type="function">
    <text evidence="1">Because S100A10 induces the dimerization of ANXA2/p36, it may function as a regulator of protein phosphorylation in that the ANXA2 monomer is the preferred target (in vitro) of tyrosine-specific kinase.</text>
</comment>
<comment type="subunit">
    <text evidence="2 3 4">Heterotetramer containing 2 light chains of S100A10/p11 and 2 heavy chains of ANXA2/p36 (By similarity). Interacts with SCN10A (By similarity). Interacts with TASOR (By similarity).</text>
</comment>
<comment type="miscellaneous">
    <text>Does not appear to bind calcium. Contains 2 ancestral calcium site related to EF-hand domains that have lost their ability to bind calcium.</text>
</comment>
<comment type="similarity">
    <text evidence="6">Belongs to the S-100 family.</text>
</comment>